<organism>
    <name type="scientific">African swine fever virus (strain Badajoz 1971 Vero-adapted)</name>
    <name type="common">Ba71V</name>
    <name type="synonym">ASFV</name>
    <dbReference type="NCBI Taxonomy" id="10498"/>
    <lineage>
        <taxon>Viruses</taxon>
        <taxon>Varidnaviria</taxon>
        <taxon>Bamfordvirae</taxon>
        <taxon>Nucleocytoviricota</taxon>
        <taxon>Pokkesviricetes</taxon>
        <taxon>Asfuvirales</taxon>
        <taxon>Asfarviridae</taxon>
        <taxon>Asfivirus</taxon>
        <taxon>African swine fever virus</taxon>
    </lineage>
</organism>
<feature type="chain" id="PRO_0000373375" description="Putative primase C962R">
    <location>
        <begin position="1"/>
        <end position="962"/>
    </location>
</feature>
<feature type="domain" description="SF3 helicase" evidence="1">
    <location>
        <begin position="607"/>
        <end position="775"/>
    </location>
</feature>
<feature type="binding site" evidence="1">
    <location>
        <begin position="636"/>
        <end position="643"/>
    </location>
    <ligand>
        <name>ATP</name>
        <dbReference type="ChEBI" id="CHEBI:30616"/>
    </ligand>
</feature>
<name>H962R_ASFB7</name>
<comment type="induction">
    <text evidence="2">Expressed in the late phase of the viral replicative cycle.</text>
</comment>
<comment type="similarity">
    <text evidence="3">Belongs to the asfivirus helicase C962R family.</text>
</comment>
<protein>
    <recommendedName>
        <fullName>Putative primase C962R</fullName>
        <ecNumber>3.6.4.-</ecNumber>
    </recommendedName>
</protein>
<dbReference type="EC" id="3.6.4.-"/>
<dbReference type="EMBL" id="U18466">
    <property type="protein sequence ID" value="AAA65301.1"/>
    <property type="molecule type" value="Genomic_DNA"/>
</dbReference>
<dbReference type="RefSeq" id="NP_042765.1">
    <property type="nucleotide sequence ID" value="NC_001659.2"/>
</dbReference>
<dbReference type="SMR" id="Q65162"/>
<dbReference type="GeneID" id="22220301"/>
<dbReference type="KEGG" id="vg:22220301"/>
<dbReference type="Proteomes" id="UP000000624">
    <property type="component" value="Segment"/>
</dbReference>
<dbReference type="GO" id="GO:0005524">
    <property type="term" value="F:ATP binding"/>
    <property type="evidence" value="ECO:0007669"/>
    <property type="project" value="UniProtKB-KW"/>
</dbReference>
<dbReference type="GO" id="GO:0004386">
    <property type="term" value="F:helicase activity"/>
    <property type="evidence" value="ECO:0007669"/>
    <property type="project" value="UniProtKB-KW"/>
</dbReference>
<dbReference type="GO" id="GO:0016817">
    <property type="term" value="F:hydrolase activity, acting on acid anhydrides"/>
    <property type="evidence" value="ECO:0007669"/>
    <property type="project" value="InterPro"/>
</dbReference>
<dbReference type="GO" id="GO:0006260">
    <property type="term" value="P:DNA replication"/>
    <property type="evidence" value="ECO:0007669"/>
    <property type="project" value="UniProtKB-KW"/>
</dbReference>
<dbReference type="Gene3D" id="3.40.50.300">
    <property type="entry name" value="P-loop containing nucleotide triphosphate hydrolases"/>
    <property type="match status" value="1"/>
</dbReference>
<dbReference type="InterPro" id="IPR056443">
    <property type="entry name" value="AEP_C962R"/>
</dbReference>
<dbReference type="InterPro" id="IPR014015">
    <property type="entry name" value="Helicase_SF3_DNA-vir"/>
</dbReference>
<dbReference type="InterPro" id="IPR027417">
    <property type="entry name" value="P-loop_NTPase"/>
</dbReference>
<dbReference type="InterPro" id="IPR014818">
    <property type="entry name" value="Phage/plasmid_primase_P4_C"/>
</dbReference>
<dbReference type="InterPro" id="IPR014819">
    <property type="entry name" value="PriCT_2"/>
</dbReference>
<dbReference type="InterPro" id="IPR051620">
    <property type="entry name" value="Viral_Helicase-Primase_Cplx"/>
</dbReference>
<dbReference type="PANTHER" id="PTHR35372">
    <property type="entry name" value="ATP BINDING PROTEIN-RELATED"/>
    <property type="match status" value="1"/>
</dbReference>
<dbReference type="PANTHER" id="PTHR35372:SF2">
    <property type="entry name" value="SF3 HELICASE DOMAIN-CONTAINING PROTEIN"/>
    <property type="match status" value="1"/>
</dbReference>
<dbReference type="Pfam" id="PF23162">
    <property type="entry name" value="AEP_C962R"/>
    <property type="match status" value="1"/>
</dbReference>
<dbReference type="Pfam" id="PF08706">
    <property type="entry name" value="D5_N"/>
    <property type="match status" value="1"/>
</dbReference>
<dbReference type="Pfam" id="PF08707">
    <property type="entry name" value="PriCT_2"/>
    <property type="match status" value="1"/>
</dbReference>
<dbReference type="SUPFAM" id="SSF52540">
    <property type="entry name" value="P-loop containing nucleoside triphosphate hydrolases"/>
    <property type="match status" value="1"/>
</dbReference>
<dbReference type="PROSITE" id="PS51206">
    <property type="entry name" value="SF3_HELICASE_1"/>
    <property type="match status" value="1"/>
</dbReference>
<accession>Q65162</accession>
<organismHost>
    <name type="scientific">Ornithodoros</name>
    <name type="common">relapsing fever ticks</name>
    <dbReference type="NCBI Taxonomy" id="6937"/>
</organismHost>
<organismHost>
    <name type="scientific">Sus scrofa</name>
    <name type="common">Pig</name>
    <dbReference type="NCBI Taxonomy" id="9823"/>
</organismHost>
<gene>
    <name type="ordered locus">Ba71V-071</name>
    <name type="ORF">C962R</name>
</gene>
<reference key="1">
    <citation type="journal article" date="1995" name="Virology">
        <title>Analysis of the complete nucleotide sequence of African swine fever virus.</title>
        <authorList>
            <person name="Yanez R.J."/>
            <person name="Rodriguez J.M."/>
            <person name="Nogal M.L."/>
            <person name="Yuste L."/>
            <person name="Enriquez C."/>
            <person name="Rodriguez J.F."/>
            <person name="Vinuela E."/>
        </authorList>
    </citation>
    <scope>NUCLEOTIDE SEQUENCE [LARGE SCALE GENOMIC DNA]</scope>
</reference>
<reference key="2">
    <citation type="journal article" date="2020" name="J. Virol.">
        <title>The African Swine Fever Virus Transcriptome.</title>
        <authorList>
            <person name="Cackett G."/>
            <person name="Matelska D."/>
            <person name="Sykora M."/>
            <person name="Portugal R."/>
            <person name="Malecki M."/>
            <person name="Baehler J."/>
            <person name="Dixon L."/>
            <person name="Werner F."/>
        </authorList>
    </citation>
    <scope>INDUCTION</scope>
</reference>
<keyword id="KW-0067">ATP-binding</keyword>
<keyword id="KW-0235">DNA replication</keyword>
<keyword id="KW-0347">Helicase</keyword>
<keyword id="KW-0378">Hydrolase</keyword>
<keyword id="KW-0426">Late protein</keyword>
<keyword id="KW-0547">Nucleotide-binding</keyword>
<keyword id="KW-1185">Reference proteome</keyword>
<sequence>MREESWEDHDTIQLTAQRKYLAEVQALETLLTRELSAFLTEPGSKKTNIINRITGKTYALPSTELLRLYEHLEQCRKQGALMYFLERQGTYSGLMLDYDLKLNTNAVPPLEPPALSRLCHRIFVHIKNSSVLPEGSHKIHFFFTLKPEVVQGKYGFHVLIPGLKLAASTKKSIIGSLQHDATVQKILHEQGVANPESCLDPHSASVPSLLYGSSKLNHKPYQLKTGFELVFDSSDPDYIPIHQIKNIESYNLVSELSLTNEQGSLVRPVYCAADIAAEKEEEIPTDDHSLSILMLHDPEARYLHKILNLLPPEYYVEYPLWSNVVFALANTSANYRPLAEWFSQKCPEKWNTGGKEKLEKLWNDASRHTEKKITKRSIMYWAHKHAPQQYKEIVEQGYFSILAEYVYSYNGMLEHYMIAKVIYAMMGNKFVVDVDSNGKYVWFEFVLPGQPMNQGEIWKWRKEVNPDELHIYISENFSRVMDRITEHIKYHLSQPHETNILNYYKKLLKAFERSKSKIFNDSFKKGVIRQAEFLFRQRSFIQTLDTNPHLLGVGNGVLSIETIPAKLINHFHEHPIHQYTHICYVPFNPENPWTKLLLNALQDIIPELDARLWIMFYLSTAIFRGLKEALMLLWLGGGCNGKTFLMRLVAMVLGDHYASKLNISLLTSCRETAEKPNSAFMRLKGRGYGYFEETNKSEVLNTSRLKEMVNPGDVTARELNQKQESFQMTATMVAASNYNFIIDTTDHGTWRRLRHYRSKVKFCHNPDPGNPYEKKEDPRFIHEYIMDPDCQNAFFSILVYFWEKLQKEYNGQIKKVFCPTIESETEAYRKSQDTLHRFITERVVESPSAETVYNLSEVVTAYAEWYNANINVKRHIALELSQELENSVLEKYLQWSPNKTRILKGCRILHKFETLQPGESYIGVSTAGTLLNTPICEPKNKWWEWSPNLSAPPEKEASAPTP</sequence>
<evidence type="ECO:0000255" key="1">
    <source>
        <dbReference type="PROSITE-ProRule" id="PRU00551"/>
    </source>
</evidence>
<evidence type="ECO:0000269" key="2">
    <source>
    </source>
</evidence>
<evidence type="ECO:0000305" key="3"/>
<proteinExistence type="evidence at transcript level"/>